<name>PANB_MYCSK</name>
<accession>A1UID0</accession>
<gene>
    <name evidence="1" type="primary">panB</name>
    <name type="ordered locus">Mkms_3394</name>
</gene>
<keyword id="KW-0963">Cytoplasm</keyword>
<keyword id="KW-0460">Magnesium</keyword>
<keyword id="KW-0479">Metal-binding</keyword>
<keyword id="KW-0566">Pantothenate biosynthesis</keyword>
<keyword id="KW-0808">Transferase</keyword>
<reference key="1">
    <citation type="submission" date="2006-12" db="EMBL/GenBank/DDBJ databases">
        <title>Complete sequence of chromosome of Mycobacterium sp. KMS.</title>
        <authorList>
            <consortium name="US DOE Joint Genome Institute"/>
            <person name="Copeland A."/>
            <person name="Lucas S."/>
            <person name="Lapidus A."/>
            <person name="Barry K."/>
            <person name="Detter J.C."/>
            <person name="Glavina del Rio T."/>
            <person name="Hammon N."/>
            <person name="Israni S."/>
            <person name="Dalin E."/>
            <person name="Tice H."/>
            <person name="Pitluck S."/>
            <person name="Kiss H."/>
            <person name="Brettin T."/>
            <person name="Bruce D."/>
            <person name="Han C."/>
            <person name="Tapia R."/>
            <person name="Gilna P."/>
            <person name="Schmutz J."/>
            <person name="Larimer F."/>
            <person name="Land M."/>
            <person name="Hauser L."/>
            <person name="Kyrpides N."/>
            <person name="Mikhailova N."/>
            <person name="Miller C.D."/>
            <person name="Richardson P."/>
        </authorList>
    </citation>
    <scope>NUCLEOTIDE SEQUENCE [LARGE SCALE GENOMIC DNA]</scope>
    <source>
        <strain>KMS</strain>
    </source>
</reference>
<proteinExistence type="inferred from homology"/>
<protein>
    <recommendedName>
        <fullName evidence="1">3-methyl-2-oxobutanoate hydroxymethyltransferase</fullName>
        <ecNumber evidence="1">2.1.2.11</ecNumber>
    </recommendedName>
    <alternativeName>
        <fullName evidence="1">Ketopantoate hydroxymethyltransferase</fullName>
        <shortName evidence="1">KPHMT</shortName>
    </alternativeName>
</protein>
<feature type="chain" id="PRO_0000297301" description="3-methyl-2-oxobutanoate hydroxymethyltransferase">
    <location>
        <begin position="1"/>
        <end position="282"/>
    </location>
</feature>
<feature type="active site" description="Proton acceptor" evidence="1">
    <location>
        <position position="200"/>
    </location>
</feature>
<feature type="binding site" evidence="1">
    <location>
        <begin position="63"/>
        <end position="64"/>
    </location>
    <ligand>
        <name>3-methyl-2-oxobutanoate</name>
        <dbReference type="ChEBI" id="CHEBI:11851"/>
    </ligand>
</feature>
<feature type="binding site" evidence="1">
    <location>
        <position position="63"/>
    </location>
    <ligand>
        <name>Mg(2+)</name>
        <dbReference type="ChEBI" id="CHEBI:18420"/>
    </ligand>
</feature>
<feature type="binding site" evidence="1">
    <location>
        <position position="102"/>
    </location>
    <ligand>
        <name>3-methyl-2-oxobutanoate</name>
        <dbReference type="ChEBI" id="CHEBI:11851"/>
    </ligand>
</feature>
<feature type="binding site" evidence="1">
    <location>
        <position position="102"/>
    </location>
    <ligand>
        <name>Mg(2+)</name>
        <dbReference type="ChEBI" id="CHEBI:18420"/>
    </ligand>
</feature>
<feature type="binding site" evidence="1">
    <location>
        <position position="132"/>
    </location>
    <ligand>
        <name>3-methyl-2-oxobutanoate</name>
        <dbReference type="ChEBI" id="CHEBI:11851"/>
    </ligand>
</feature>
<feature type="binding site" evidence="1">
    <location>
        <position position="134"/>
    </location>
    <ligand>
        <name>Mg(2+)</name>
        <dbReference type="ChEBI" id="CHEBI:18420"/>
    </ligand>
</feature>
<evidence type="ECO:0000255" key="1">
    <source>
        <dbReference type="HAMAP-Rule" id="MF_00156"/>
    </source>
</evidence>
<organism>
    <name type="scientific">Mycobacterium sp. (strain KMS)</name>
    <dbReference type="NCBI Taxonomy" id="189918"/>
    <lineage>
        <taxon>Bacteria</taxon>
        <taxon>Bacillati</taxon>
        <taxon>Actinomycetota</taxon>
        <taxon>Actinomycetes</taxon>
        <taxon>Mycobacteriales</taxon>
        <taxon>Mycobacteriaceae</taxon>
        <taxon>Mycobacterium</taxon>
    </lineage>
</organism>
<comment type="function">
    <text evidence="1">Catalyzes the reversible reaction in which hydroxymethyl group from 5,10-methylenetetrahydrofolate is transferred onto alpha-ketoisovalerate to form ketopantoate.</text>
</comment>
<comment type="catalytic activity">
    <reaction evidence="1">
        <text>3-methyl-2-oxobutanoate + (6R)-5,10-methylene-5,6,7,8-tetrahydrofolate + H2O = 2-dehydropantoate + (6S)-5,6,7,8-tetrahydrofolate</text>
        <dbReference type="Rhea" id="RHEA:11824"/>
        <dbReference type="ChEBI" id="CHEBI:11561"/>
        <dbReference type="ChEBI" id="CHEBI:11851"/>
        <dbReference type="ChEBI" id="CHEBI:15377"/>
        <dbReference type="ChEBI" id="CHEBI:15636"/>
        <dbReference type="ChEBI" id="CHEBI:57453"/>
        <dbReference type="EC" id="2.1.2.11"/>
    </reaction>
</comment>
<comment type="cofactor">
    <cofactor evidence="1">
        <name>Mg(2+)</name>
        <dbReference type="ChEBI" id="CHEBI:18420"/>
    </cofactor>
    <text evidence="1">Binds 1 Mg(2+) ion per subunit.</text>
</comment>
<comment type="pathway">
    <text evidence="1">Cofactor biosynthesis; (R)-pantothenate biosynthesis; (R)-pantoate from 3-methyl-2-oxobutanoate: step 1/2.</text>
</comment>
<comment type="subunit">
    <text evidence="1">Homodecamer; pentamer of dimers.</text>
</comment>
<comment type="subcellular location">
    <subcellularLocation>
        <location evidence="1">Cytoplasm</location>
    </subcellularLocation>
</comment>
<comment type="similarity">
    <text evidence="1">Belongs to the PanB family.</text>
</comment>
<sequence length="282" mass="29727">MSEQTVYGAASDQPTPKPRVKVRTTHLQKWKAEGHKWAMLTAYDFSTARAFDDAGIPVLLVGDSAANVVYGYDTTVPITIDELIPLVRGVVRGAPHALVVADLPFGSYEEGPRQALATATRFLKETGAHAVKLEGGERVAEQIATLSAAGIPVMAHIGFTPQSVNGLGGFKVQGRGDAAEQTIHDAIAVQEAGAFSVVMEMVPAELATQITGKLTIPTVGIGAGPNCDAQVLVWQDMAGLTSGRTAKFVKRFGDVGAELRRAASQYADEVAAGVFPAEEHSF</sequence>
<dbReference type="EC" id="2.1.2.11" evidence="1"/>
<dbReference type="EMBL" id="CP000518">
    <property type="protein sequence ID" value="ABL92588.1"/>
    <property type="molecule type" value="Genomic_DNA"/>
</dbReference>
<dbReference type="SMR" id="A1UID0"/>
<dbReference type="STRING" id="189918.Mkms_3394"/>
<dbReference type="KEGG" id="mkm:Mkms_3394"/>
<dbReference type="HOGENOM" id="CLU_036645_1_0_11"/>
<dbReference type="OrthoDB" id="9781789at2"/>
<dbReference type="UniPathway" id="UPA00028">
    <property type="reaction ID" value="UER00003"/>
</dbReference>
<dbReference type="GO" id="GO:0005737">
    <property type="term" value="C:cytoplasm"/>
    <property type="evidence" value="ECO:0007669"/>
    <property type="project" value="UniProtKB-SubCell"/>
</dbReference>
<dbReference type="GO" id="GO:0003864">
    <property type="term" value="F:3-methyl-2-oxobutanoate hydroxymethyltransferase activity"/>
    <property type="evidence" value="ECO:0007669"/>
    <property type="project" value="UniProtKB-UniRule"/>
</dbReference>
<dbReference type="GO" id="GO:0000287">
    <property type="term" value="F:magnesium ion binding"/>
    <property type="evidence" value="ECO:0007669"/>
    <property type="project" value="TreeGrafter"/>
</dbReference>
<dbReference type="GO" id="GO:0015940">
    <property type="term" value="P:pantothenate biosynthetic process"/>
    <property type="evidence" value="ECO:0007669"/>
    <property type="project" value="UniProtKB-UniRule"/>
</dbReference>
<dbReference type="CDD" id="cd06557">
    <property type="entry name" value="KPHMT-like"/>
    <property type="match status" value="1"/>
</dbReference>
<dbReference type="FunFam" id="3.20.20.60:FF:000003">
    <property type="entry name" value="3-methyl-2-oxobutanoate hydroxymethyltransferase"/>
    <property type="match status" value="1"/>
</dbReference>
<dbReference type="Gene3D" id="3.20.20.60">
    <property type="entry name" value="Phosphoenolpyruvate-binding domains"/>
    <property type="match status" value="1"/>
</dbReference>
<dbReference type="HAMAP" id="MF_00156">
    <property type="entry name" value="PanB"/>
    <property type="match status" value="1"/>
</dbReference>
<dbReference type="InterPro" id="IPR003700">
    <property type="entry name" value="Pantoate_hydroxy_MeTrfase"/>
</dbReference>
<dbReference type="InterPro" id="IPR015813">
    <property type="entry name" value="Pyrv/PenolPyrv_kinase-like_dom"/>
</dbReference>
<dbReference type="InterPro" id="IPR040442">
    <property type="entry name" value="Pyrv_kinase-like_dom_sf"/>
</dbReference>
<dbReference type="NCBIfam" id="TIGR00222">
    <property type="entry name" value="panB"/>
    <property type="match status" value="1"/>
</dbReference>
<dbReference type="NCBIfam" id="NF001452">
    <property type="entry name" value="PRK00311.1"/>
    <property type="match status" value="1"/>
</dbReference>
<dbReference type="PANTHER" id="PTHR20881">
    <property type="entry name" value="3-METHYL-2-OXOBUTANOATE HYDROXYMETHYLTRANSFERASE"/>
    <property type="match status" value="1"/>
</dbReference>
<dbReference type="PANTHER" id="PTHR20881:SF0">
    <property type="entry name" value="3-METHYL-2-OXOBUTANOATE HYDROXYMETHYLTRANSFERASE"/>
    <property type="match status" value="1"/>
</dbReference>
<dbReference type="Pfam" id="PF02548">
    <property type="entry name" value="Pantoate_transf"/>
    <property type="match status" value="1"/>
</dbReference>
<dbReference type="PIRSF" id="PIRSF000388">
    <property type="entry name" value="Pantoate_hydroxy_MeTrfase"/>
    <property type="match status" value="1"/>
</dbReference>
<dbReference type="SUPFAM" id="SSF51621">
    <property type="entry name" value="Phosphoenolpyruvate/pyruvate domain"/>
    <property type="match status" value="1"/>
</dbReference>